<proteinExistence type="evidence at protein level"/>
<evidence type="ECO:0000250" key="1">
    <source>
        <dbReference type="UniProtKB" id="P62699"/>
    </source>
</evidence>
<evidence type="ECO:0000250" key="2">
    <source>
        <dbReference type="UniProtKB" id="Q65Z55"/>
    </source>
</evidence>
<evidence type="ECO:0000255" key="3">
    <source>
        <dbReference type="PROSITE-ProRule" id="PRU01128"/>
    </source>
</evidence>
<evidence type="ECO:0000305" key="4"/>
<evidence type="ECO:0007744" key="5">
    <source>
    </source>
</evidence>
<feature type="chain" id="PRO_0000212397" description="Protein yippee-like 5">
    <location>
        <begin position="1"/>
        <end position="121"/>
    </location>
</feature>
<feature type="domain" description="Yippee" evidence="3">
    <location>
        <begin position="13"/>
        <end position="110"/>
    </location>
</feature>
<feature type="binding site" evidence="3">
    <location>
        <position position="17"/>
    </location>
    <ligand>
        <name>Zn(2+)</name>
        <dbReference type="ChEBI" id="CHEBI:29105"/>
    </ligand>
</feature>
<feature type="binding site" evidence="3">
    <location>
        <position position="20"/>
    </location>
    <ligand>
        <name>Zn(2+)</name>
        <dbReference type="ChEBI" id="CHEBI:29105"/>
    </ligand>
</feature>
<feature type="binding site" evidence="3">
    <location>
        <position position="73"/>
    </location>
    <ligand>
        <name>Zn(2+)</name>
        <dbReference type="ChEBI" id="CHEBI:29105"/>
    </ligand>
</feature>
<feature type="binding site" evidence="3">
    <location>
        <position position="76"/>
    </location>
    <ligand>
        <name>Zn(2+)</name>
        <dbReference type="ChEBI" id="CHEBI:29105"/>
    </ligand>
</feature>
<feature type="modified residue" description="Phosphoserine" evidence="5">
    <location>
        <position position="118"/>
    </location>
</feature>
<gene>
    <name type="primary">Ypel5</name>
</gene>
<organism>
    <name type="scientific">Mus musculus</name>
    <name type="common">Mouse</name>
    <dbReference type="NCBI Taxonomy" id="10090"/>
    <lineage>
        <taxon>Eukaryota</taxon>
        <taxon>Metazoa</taxon>
        <taxon>Chordata</taxon>
        <taxon>Craniata</taxon>
        <taxon>Vertebrata</taxon>
        <taxon>Euteleostomi</taxon>
        <taxon>Mammalia</taxon>
        <taxon>Eutheria</taxon>
        <taxon>Euarchontoglires</taxon>
        <taxon>Glires</taxon>
        <taxon>Rodentia</taxon>
        <taxon>Myomorpha</taxon>
        <taxon>Muroidea</taxon>
        <taxon>Muridae</taxon>
        <taxon>Murinae</taxon>
        <taxon>Mus</taxon>
        <taxon>Mus</taxon>
    </lineage>
</organism>
<protein>
    <recommendedName>
        <fullName>Protein yippee-like 5</fullName>
    </recommendedName>
</protein>
<sequence length="121" mass="13842">MGRIFLDHIGGTRLFSCANCDTILTNRSELISTRFTGATGRAFLFNKVVNLQYSEVQDRVMLTGRHMVRDVSCKNCNSKLGWIYEFATEDSQRYKEGRVILERALVRESEGFEEHVPSDNS</sequence>
<comment type="function">
    <text evidence="1 2">Component of the CTLH E3 ubiquitin-protein ligase complex that selectively accepts ubiquitin from UBE2H and mediates ubiquitination and subsequent proteasomal degradation of the transcription factor HBP1 (By similarity). Required for normal cell proliferation (By similarity).</text>
</comment>
<comment type="subunit">
    <text evidence="1">Identified in the CTLH complex that contains GID4, RANBP9 and/or RANBP10, MKLN1, MAEA, RMND5A (or alternatively its paralog RMND5B), GID8, ARMC8, WDR26 and YPEL5. Within this complex, MAEA, RMND5A (or alternatively its paralog RMND5B), GID8, WDR26, and RANBP9 and/or RANBP10 form the catalytic core, while GID4, MKLN1, ARMC8 and YPEL5 have ancillary roles. Interacts with RANBP9 and RANBP10.</text>
</comment>
<comment type="subcellular location">
    <subcellularLocation>
        <location evidence="2">Nucleus</location>
    </subcellularLocation>
    <subcellularLocation>
        <location evidence="2">Cytoplasm</location>
        <location evidence="2">Cytoskeleton</location>
        <location evidence="2">Microtubule organizing center</location>
        <location evidence="2">Centrosome</location>
    </subcellularLocation>
    <subcellularLocation>
        <location evidence="2">Cytoplasm</location>
        <location evidence="2">Cytoskeleton</location>
        <location evidence="2">Spindle pole</location>
    </subcellularLocation>
    <subcellularLocation>
        <location evidence="2">Midbody</location>
    </subcellularLocation>
    <text evidence="2">Deteted in nucleus and at the centrosome during interphase. During mitosis, detected on the mitotic spindle, at spindle poles and at the midbody.</text>
</comment>
<comment type="similarity">
    <text evidence="4">Belongs to the yippee family.</text>
</comment>
<keyword id="KW-0963">Cytoplasm</keyword>
<keyword id="KW-0206">Cytoskeleton</keyword>
<keyword id="KW-0479">Metal-binding</keyword>
<keyword id="KW-0539">Nucleus</keyword>
<keyword id="KW-0597">Phosphoprotein</keyword>
<keyword id="KW-1185">Reference proteome</keyword>
<keyword id="KW-0862">Zinc</keyword>
<accession>P62700</accession>
<accession>Q543T4</accession>
<accession>Q8R174</accession>
<accession>Q9D6M1</accession>
<accession>Q9UMX7</accession>
<accession>Q9Y3C9</accession>
<reference key="1">
    <citation type="journal article" date="2005" name="Science">
        <title>The transcriptional landscape of the mammalian genome.</title>
        <authorList>
            <person name="Carninci P."/>
            <person name="Kasukawa T."/>
            <person name="Katayama S."/>
            <person name="Gough J."/>
            <person name="Frith M.C."/>
            <person name="Maeda N."/>
            <person name="Oyama R."/>
            <person name="Ravasi T."/>
            <person name="Lenhard B."/>
            <person name="Wells C."/>
            <person name="Kodzius R."/>
            <person name="Shimokawa K."/>
            <person name="Bajic V.B."/>
            <person name="Brenner S.E."/>
            <person name="Batalov S."/>
            <person name="Forrest A.R."/>
            <person name="Zavolan M."/>
            <person name="Davis M.J."/>
            <person name="Wilming L.G."/>
            <person name="Aidinis V."/>
            <person name="Allen J.E."/>
            <person name="Ambesi-Impiombato A."/>
            <person name="Apweiler R."/>
            <person name="Aturaliya R.N."/>
            <person name="Bailey T.L."/>
            <person name="Bansal M."/>
            <person name="Baxter L."/>
            <person name="Beisel K.W."/>
            <person name="Bersano T."/>
            <person name="Bono H."/>
            <person name="Chalk A.M."/>
            <person name="Chiu K.P."/>
            <person name="Choudhary V."/>
            <person name="Christoffels A."/>
            <person name="Clutterbuck D.R."/>
            <person name="Crowe M.L."/>
            <person name="Dalla E."/>
            <person name="Dalrymple B.P."/>
            <person name="de Bono B."/>
            <person name="Della Gatta G."/>
            <person name="di Bernardo D."/>
            <person name="Down T."/>
            <person name="Engstrom P."/>
            <person name="Fagiolini M."/>
            <person name="Faulkner G."/>
            <person name="Fletcher C.F."/>
            <person name="Fukushima T."/>
            <person name="Furuno M."/>
            <person name="Futaki S."/>
            <person name="Gariboldi M."/>
            <person name="Georgii-Hemming P."/>
            <person name="Gingeras T.R."/>
            <person name="Gojobori T."/>
            <person name="Green R.E."/>
            <person name="Gustincich S."/>
            <person name="Harbers M."/>
            <person name="Hayashi Y."/>
            <person name="Hensch T.K."/>
            <person name="Hirokawa N."/>
            <person name="Hill D."/>
            <person name="Huminiecki L."/>
            <person name="Iacono M."/>
            <person name="Ikeo K."/>
            <person name="Iwama A."/>
            <person name="Ishikawa T."/>
            <person name="Jakt M."/>
            <person name="Kanapin A."/>
            <person name="Katoh M."/>
            <person name="Kawasawa Y."/>
            <person name="Kelso J."/>
            <person name="Kitamura H."/>
            <person name="Kitano H."/>
            <person name="Kollias G."/>
            <person name="Krishnan S.P."/>
            <person name="Kruger A."/>
            <person name="Kummerfeld S.K."/>
            <person name="Kurochkin I.V."/>
            <person name="Lareau L.F."/>
            <person name="Lazarevic D."/>
            <person name="Lipovich L."/>
            <person name="Liu J."/>
            <person name="Liuni S."/>
            <person name="McWilliam S."/>
            <person name="Madan Babu M."/>
            <person name="Madera M."/>
            <person name="Marchionni L."/>
            <person name="Matsuda H."/>
            <person name="Matsuzawa S."/>
            <person name="Miki H."/>
            <person name="Mignone F."/>
            <person name="Miyake S."/>
            <person name="Morris K."/>
            <person name="Mottagui-Tabar S."/>
            <person name="Mulder N."/>
            <person name="Nakano N."/>
            <person name="Nakauchi H."/>
            <person name="Ng P."/>
            <person name="Nilsson R."/>
            <person name="Nishiguchi S."/>
            <person name="Nishikawa S."/>
            <person name="Nori F."/>
            <person name="Ohara O."/>
            <person name="Okazaki Y."/>
            <person name="Orlando V."/>
            <person name="Pang K.C."/>
            <person name="Pavan W.J."/>
            <person name="Pavesi G."/>
            <person name="Pesole G."/>
            <person name="Petrovsky N."/>
            <person name="Piazza S."/>
            <person name="Reed J."/>
            <person name="Reid J.F."/>
            <person name="Ring B.Z."/>
            <person name="Ringwald M."/>
            <person name="Rost B."/>
            <person name="Ruan Y."/>
            <person name="Salzberg S.L."/>
            <person name="Sandelin A."/>
            <person name="Schneider C."/>
            <person name="Schoenbach C."/>
            <person name="Sekiguchi K."/>
            <person name="Semple C.A."/>
            <person name="Seno S."/>
            <person name="Sessa L."/>
            <person name="Sheng Y."/>
            <person name="Shibata Y."/>
            <person name="Shimada H."/>
            <person name="Shimada K."/>
            <person name="Silva D."/>
            <person name="Sinclair B."/>
            <person name="Sperling S."/>
            <person name="Stupka E."/>
            <person name="Sugiura K."/>
            <person name="Sultana R."/>
            <person name="Takenaka Y."/>
            <person name="Taki K."/>
            <person name="Tammoja K."/>
            <person name="Tan S.L."/>
            <person name="Tang S."/>
            <person name="Taylor M.S."/>
            <person name="Tegner J."/>
            <person name="Teichmann S.A."/>
            <person name="Ueda H.R."/>
            <person name="van Nimwegen E."/>
            <person name="Verardo R."/>
            <person name="Wei C.L."/>
            <person name="Yagi K."/>
            <person name="Yamanishi H."/>
            <person name="Zabarovsky E."/>
            <person name="Zhu S."/>
            <person name="Zimmer A."/>
            <person name="Hide W."/>
            <person name="Bult C."/>
            <person name="Grimmond S.M."/>
            <person name="Teasdale R.D."/>
            <person name="Liu E.T."/>
            <person name="Brusic V."/>
            <person name="Quackenbush J."/>
            <person name="Wahlestedt C."/>
            <person name="Mattick J.S."/>
            <person name="Hume D.A."/>
            <person name="Kai C."/>
            <person name="Sasaki D."/>
            <person name="Tomaru Y."/>
            <person name="Fukuda S."/>
            <person name="Kanamori-Katayama M."/>
            <person name="Suzuki M."/>
            <person name="Aoki J."/>
            <person name="Arakawa T."/>
            <person name="Iida J."/>
            <person name="Imamura K."/>
            <person name="Itoh M."/>
            <person name="Kato T."/>
            <person name="Kawaji H."/>
            <person name="Kawagashira N."/>
            <person name="Kawashima T."/>
            <person name="Kojima M."/>
            <person name="Kondo S."/>
            <person name="Konno H."/>
            <person name="Nakano K."/>
            <person name="Ninomiya N."/>
            <person name="Nishio T."/>
            <person name="Okada M."/>
            <person name="Plessy C."/>
            <person name="Shibata K."/>
            <person name="Shiraki T."/>
            <person name="Suzuki S."/>
            <person name="Tagami M."/>
            <person name="Waki K."/>
            <person name="Watahiki A."/>
            <person name="Okamura-Oho Y."/>
            <person name="Suzuki H."/>
            <person name="Kawai J."/>
            <person name="Hayashizaki Y."/>
        </authorList>
    </citation>
    <scope>NUCLEOTIDE SEQUENCE [LARGE SCALE MRNA]</scope>
    <source>
        <strain>BALB/cJ</strain>
        <strain>C57BL/6J</strain>
        <strain>NOD</strain>
        <tissue>Amnion</tissue>
        <tissue>Bone</tissue>
        <tissue>Cerebellum</tissue>
        <tissue>Corpora quadrigemina</tissue>
        <tissue>Spinal cord</tissue>
        <tissue>Tongue</tissue>
    </source>
</reference>
<reference key="2">
    <citation type="journal article" date="2004" name="Genome Res.">
        <title>The status, quality, and expansion of the NIH full-length cDNA project: the Mammalian Gene Collection (MGC).</title>
        <authorList>
            <consortium name="The MGC Project Team"/>
        </authorList>
    </citation>
    <scope>NUCLEOTIDE SEQUENCE [LARGE SCALE MRNA]</scope>
    <source>
        <tissue>Salivary gland</tissue>
        <tissue>Trophoblast stem cell</tissue>
    </source>
</reference>
<reference key="3">
    <citation type="journal article" date="2010" name="Cell">
        <title>A tissue-specific atlas of mouse protein phosphorylation and expression.</title>
        <authorList>
            <person name="Huttlin E.L."/>
            <person name="Jedrychowski M.P."/>
            <person name="Elias J.E."/>
            <person name="Goswami T."/>
            <person name="Rad R."/>
            <person name="Beausoleil S.A."/>
            <person name="Villen J."/>
            <person name="Haas W."/>
            <person name="Sowa M.E."/>
            <person name="Gygi S.P."/>
        </authorList>
    </citation>
    <scope>PHOSPHORYLATION [LARGE SCALE ANALYSIS] AT SER-118</scope>
    <scope>IDENTIFICATION BY MASS SPECTROMETRY [LARGE SCALE ANALYSIS]</scope>
    <source>
        <tissue>Brain</tissue>
        <tissue>Lung</tissue>
        <tissue>Testis</tissue>
    </source>
</reference>
<name>YPEL5_MOUSE</name>
<dbReference type="EMBL" id="AK010201">
    <property type="protein sequence ID" value="BAB26764.1"/>
    <property type="molecule type" value="mRNA"/>
</dbReference>
<dbReference type="EMBL" id="AK046281">
    <property type="protein sequence ID" value="BAC32668.1"/>
    <property type="molecule type" value="mRNA"/>
</dbReference>
<dbReference type="EMBL" id="AK049096">
    <property type="protein sequence ID" value="BAC33540.1"/>
    <property type="molecule type" value="mRNA"/>
</dbReference>
<dbReference type="EMBL" id="AK049644">
    <property type="protein sequence ID" value="BAC33855.1"/>
    <property type="molecule type" value="mRNA"/>
</dbReference>
<dbReference type="EMBL" id="AK137446">
    <property type="protein sequence ID" value="BAE23354.1"/>
    <property type="molecule type" value="mRNA"/>
</dbReference>
<dbReference type="EMBL" id="AK154461">
    <property type="protein sequence ID" value="BAE32602.1"/>
    <property type="molecule type" value="mRNA"/>
</dbReference>
<dbReference type="EMBL" id="AK167998">
    <property type="protein sequence ID" value="BAE39988.1"/>
    <property type="molecule type" value="mRNA"/>
</dbReference>
<dbReference type="EMBL" id="AK169241">
    <property type="protein sequence ID" value="BAE41007.1"/>
    <property type="molecule type" value="mRNA"/>
</dbReference>
<dbReference type="EMBL" id="AK171010">
    <property type="protein sequence ID" value="BAE42181.1"/>
    <property type="molecule type" value="mRNA"/>
</dbReference>
<dbReference type="EMBL" id="BC025125">
    <property type="protein sequence ID" value="AAH25125.1"/>
    <property type="molecule type" value="mRNA"/>
</dbReference>
<dbReference type="EMBL" id="BC085109">
    <property type="protein sequence ID" value="AAH85109.1"/>
    <property type="molecule type" value="mRNA"/>
</dbReference>
<dbReference type="CCDS" id="CCDS28963.1"/>
<dbReference type="RefSeq" id="NP_001344297.1">
    <property type="nucleotide sequence ID" value="NM_001357368.1"/>
</dbReference>
<dbReference type="RefSeq" id="NP_001344298.1">
    <property type="nucleotide sequence ID" value="NM_001357369.1"/>
</dbReference>
<dbReference type="RefSeq" id="NP_001344299.1">
    <property type="nucleotide sequence ID" value="NM_001357370.1"/>
</dbReference>
<dbReference type="RefSeq" id="NP_081442.1">
    <property type="nucleotide sequence ID" value="NM_027166.6"/>
</dbReference>
<dbReference type="RefSeq" id="XP_006524603.1">
    <property type="nucleotide sequence ID" value="XM_006524540.1"/>
</dbReference>
<dbReference type="RefSeq" id="XP_006524604.1">
    <property type="nucleotide sequence ID" value="XM_006524541.1"/>
</dbReference>
<dbReference type="RefSeq" id="XP_006524605.1">
    <property type="nucleotide sequence ID" value="XM_006524542.3"/>
</dbReference>
<dbReference type="SMR" id="P62700"/>
<dbReference type="BioGRID" id="238688">
    <property type="interactions" value="19"/>
</dbReference>
<dbReference type="FunCoup" id="P62700">
    <property type="interactions" value="602"/>
</dbReference>
<dbReference type="IntAct" id="P62700">
    <property type="interactions" value="18"/>
</dbReference>
<dbReference type="STRING" id="10090.ENSMUSP00000037764"/>
<dbReference type="iPTMnet" id="P62700"/>
<dbReference type="PhosphoSitePlus" id="P62700"/>
<dbReference type="PaxDb" id="10090-ENSMUSP00000037764"/>
<dbReference type="PeptideAtlas" id="P62700"/>
<dbReference type="ProteomicsDB" id="299635"/>
<dbReference type="Pumba" id="P62700"/>
<dbReference type="Antibodypedia" id="47369">
    <property type="antibodies" value="141 antibodies from 26 providers"/>
</dbReference>
<dbReference type="Ensembl" id="ENSMUST00000045174.7">
    <property type="protein sequence ID" value="ENSMUSP00000037764.6"/>
    <property type="gene ID" value="ENSMUSG00000039770.7"/>
</dbReference>
<dbReference type="Ensembl" id="ENSMUST00000233210.2">
    <property type="protein sequence ID" value="ENSMUSP00000156501.2"/>
    <property type="gene ID" value="ENSMUSG00000039770.7"/>
</dbReference>
<dbReference type="Ensembl" id="ENSMUST00000233886.2">
    <property type="protein sequence ID" value="ENSMUSP00000156450.2"/>
    <property type="gene ID" value="ENSMUSG00000039770.7"/>
</dbReference>
<dbReference type="GeneID" id="383295"/>
<dbReference type="KEGG" id="mmu:383295"/>
<dbReference type="UCSC" id="uc008dne.1">
    <property type="organism name" value="mouse"/>
</dbReference>
<dbReference type="AGR" id="MGI:1916937"/>
<dbReference type="CTD" id="51646"/>
<dbReference type="MGI" id="MGI:1916937">
    <property type="gene designation" value="Ypel5"/>
</dbReference>
<dbReference type="VEuPathDB" id="HostDB:ENSMUSG00000039770"/>
<dbReference type="eggNOG" id="KOG3399">
    <property type="taxonomic scope" value="Eukaryota"/>
</dbReference>
<dbReference type="GeneTree" id="ENSGT00940000154800"/>
<dbReference type="HOGENOM" id="CLU_043857_1_1_1"/>
<dbReference type="InParanoid" id="P62700"/>
<dbReference type="OMA" id="YNCAACE"/>
<dbReference type="OrthoDB" id="6407410at2759"/>
<dbReference type="PhylomeDB" id="P62700"/>
<dbReference type="TreeFam" id="TF323378"/>
<dbReference type="Reactome" id="R-MMU-6798695">
    <property type="pathway name" value="Neutrophil degranulation"/>
</dbReference>
<dbReference type="BioGRID-ORCS" id="383295">
    <property type="hits" value="3 hits in 76 CRISPR screens"/>
</dbReference>
<dbReference type="ChiTaRS" id="Ypel5">
    <property type="organism name" value="mouse"/>
</dbReference>
<dbReference type="PRO" id="PR:P62700"/>
<dbReference type="Proteomes" id="UP000000589">
    <property type="component" value="Chromosome 17"/>
</dbReference>
<dbReference type="RNAct" id="P62700">
    <property type="molecule type" value="protein"/>
</dbReference>
<dbReference type="Bgee" id="ENSMUSG00000039770">
    <property type="expression patterns" value="Expressed in blood and 245 other cell types or tissues"/>
</dbReference>
<dbReference type="ExpressionAtlas" id="P62700">
    <property type="expression patterns" value="baseline and differential"/>
</dbReference>
<dbReference type="GO" id="GO:0005813">
    <property type="term" value="C:centrosome"/>
    <property type="evidence" value="ECO:0007669"/>
    <property type="project" value="UniProtKB-SubCell"/>
</dbReference>
<dbReference type="GO" id="GO:0005737">
    <property type="term" value="C:cytoplasm"/>
    <property type="evidence" value="ECO:0007669"/>
    <property type="project" value="UniProtKB-KW"/>
</dbReference>
<dbReference type="GO" id="GO:0030496">
    <property type="term" value="C:midbody"/>
    <property type="evidence" value="ECO:0000250"/>
    <property type="project" value="UniProtKB"/>
</dbReference>
<dbReference type="GO" id="GO:0097431">
    <property type="term" value="C:mitotic spindle pole"/>
    <property type="evidence" value="ECO:0000250"/>
    <property type="project" value="UniProtKB"/>
</dbReference>
<dbReference type="GO" id="GO:0005634">
    <property type="term" value="C:nucleus"/>
    <property type="evidence" value="ECO:0000250"/>
    <property type="project" value="UniProtKB"/>
</dbReference>
<dbReference type="GO" id="GO:0000151">
    <property type="term" value="C:ubiquitin ligase complex"/>
    <property type="evidence" value="ECO:0007669"/>
    <property type="project" value="Ensembl"/>
</dbReference>
<dbReference type="GO" id="GO:0046872">
    <property type="term" value="F:metal ion binding"/>
    <property type="evidence" value="ECO:0007669"/>
    <property type="project" value="UniProtKB-KW"/>
</dbReference>
<dbReference type="GO" id="GO:0008283">
    <property type="term" value="P:cell population proliferation"/>
    <property type="evidence" value="ECO:0000250"/>
    <property type="project" value="UniProtKB"/>
</dbReference>
<dbReference type="InterPro" id="IPR034751">
    <property type="entry name" value="Yippee"/>
</dbReference>
<dbReference type="InterPro" id="IPR004910">
    <property type="entry name" value="Yippee/Mis18/Cereblon"/>
</dbReference>
<dbReference type="InterPro" id="IPR039058">
    <property type="entry name" value="Yippee_fam"/>
</dbReference>
<dbReference type="PANTHER" id="PTHR13848">
    <property type="entry name" value="PROTEIN YIPPEE-LIKE CG15309-RELATED"/>
    <property type="match status" value="1"/>
</dbReference>
<dbReference type="Pfam" id="PF03226">
    <property type="entry name" value="Yippee-Mis18"/>
    <property type="match status" value="1"/>
</dbReference>
<dbReference type="PROSITE" id="PS51792">
    <property type="entry name" value="YIPPEE"/>
    <property type="match status" value="1"/>
</dbReference>